<protein>
    <recommendedName>
        <fullName>Divalent-cation tolerance protein CutA</fullName>
    </recommendedName>
    <alternativeName>
        <fullName>C-type cytochrome biogenesis protein CycY</fullName>
    </alternativeName>
</protein>
<name>CUTA_ECOLI</name>
<comment type="function">
    <text evidence="2">Involved in resistance toward heavy metals.</text>
</comment>
<comment type="cofactor">
    <cofactor evidence="4">
        <name>Cu cation</name>
        <dbReference type="ChEBI" id="CHEBI:23378"/>
    </cofactor>
    <text evidence="4">Binds 1 copper ion per subunit.</text>
</comment>
<comment type="subunit">
    <text evidence="1">Homotrimer.</text>
</comment>
<comment type="subcellular location">
    <subcellularLocation>
        <location evidence="5">Cytoplasm</location>
    </subcellularLocation>
</comment>
<comment type="similarity">
    <text evidence="3">Belongs to the CutA family.</text>
</comment>
<gene>
    <name type="primary">cutA</name>
    <name type="synonym">cutA1</name>
    <name type="synonym">cycY</name>
    <name type="ordered locus">b4137</name>
    <name type="ordered locus">JW4097</name>
</gene>
<dbReference type="EMBL" id="X77707">
    <property type="protein sequence ID" value="CAA54780.1"/>
    <property type="molecule type" value="Genomic_DNA"/>
</dbReference>
<dbReference type="EMBL" id="Z36905">
    <property type="protein sequence ID" value="CAA85374.1"/>
    <property type="molecule type" value="Genomic_DNA"/>
</dbReference>
<dbReference type="EMBL" id="U14003">
    <property type="protein sequence ID" value="AAA97036.1"/>
    <property type="molecule type" value="Genomic_DNA"/>
</dbReference>
<dbReference type="EMBL" id="U00096">
    <property type="protein sequence ID" value="AAC77097.1"/>
    <property type="molecule type" value="Genomic_DNA"/>
</dbReference>
<dbReference type="EMBL" id="AP009048">
    <property type="protein sequence ID" value="BAE78139.1"/>
    <property type="molecule type" value="Genomic_DNA"/>
</dbReference>
<dbReference type="PIR" id="I41027">
    <property type="entry name" value="I41027"/>
</dbReference>
<dbReference type="RefSeq" id="NP_418560.1">
    <property type="nucleotide sequence ID" value="NC_000913.3"/>
</dbReference>
<dbReference type="RefSeq" id="WP_000883400.1">
    <property type="nucleotide sequence ID" value="NZ_STEB01000014.1"/>
</dbReference>
<dbReference type="PDB" id="1NAQ">
    <property type="method" value="X-ray"/>
    <property type="resolution" value="1.70 A"/>
    <property type="chains" value="A/B/C/D/E/F=1-112"/>
</dbReference>
<dbReference type="PDB" id="3AA8">
    <property type="method" value="X-ray"/>
    <property type="resolution" value="2.30 A"/>
    <property type="chains" value="A/B/C=1-112"/>
</dbReference>
<dbReference type="PDB" id="3AA9">
    <property type="method" value="X-ray"/>
    <property type="resolution" value="2.30 A"/>
    <property type="chains" value="A/B/C=1-112"/>
</dbReference>
<dbReference type="PDB" id="3AH6">
    <property type="method" value="X-ray"/>
    <property type="resolution" value="2.40 A"/>
    <property type="chains" value="A/B/C/D/E/F=1-112"/>
</dbReference>
<dbReference type="PDB" id="3X3U">
    <property type="method" value="X-ray"/>
    <property type="resolution" value="2.09 A"/>
    <property type="chains" value="A/B/C/D/E/F=1-112"/>
</dbReference>
<dbReference type="PDB" id="4Y65">
    <property type="method" value="X-ray"/>
    <property type="resolution" value="1.70 A"/>
    <property type="chains" value="A/B/C=1-112"/>
</dbReference>
<dbReference type="PDB" id="4Y6I">
    <property type="method" value="X-ray"/>
    <property type="resolution" value="1.70 A"/>
    <property type="chains" value="A/B/C/D/E/F=5-112"/>
</dbReference>
<dbReference type="PDBsum" id="1NAQ"/>
<dbReference type="PDBsum" id="3AA8"/>
<dbReference type="PDBsum" id="3AA9"/>
<dbReference type="PDBsum" id="3AH6"/>
<dbReference type="PDBsum" id="3X3U"/>
<dbReference type="PDBsum" id="4Y65"/>
<dbReference type="PDBsum" id="4Y6I"/>
<dbReference type="SMR" id="P69488"/>
<dbReference type="BioGRID" id="4262693">
    <property type="interactions" value="13"/>
</dbReference>
<dbReference type="BioGRID" id="852952">
    <property type="interactions" value="1"/>
</dbReference>
<dbReference type="DIP" id="DIP-47984N"/>
<dbReference type="FunCoup" id="P69488">
    <property type="interactions" value="248"/>
</dbReference>
<dbReference type="IntAct" id="P69488">
    <property type="interactions" value="10"/>
</dbReference>
<dbReference type="STRING" id="511145.b4137"/>
<dbReference type="DrugBank" id="DB03975">
    <property type="generic name" value="Mercuribenzoic Acid"/>
</dbReference>
<dbReference type="jPOST" id="P69488"/>
<dbReference type="PaxDb" id="511145-b4137"/>
<dbReference type="EnsemblBacteria" id="AAC77097">
    <property type="protein sequence ID" value="AAC77097"/>
    <property type="gene ID" value="b4137"/>
</dbReference>
<dbReference type="GeneID" id="93777687"/>
<dbReference type="GeneID" id="948660"/>
<dbReference type="KEGG" id="ecj:JW4097"/>
<dbReference type="KEGG" id="eco:b4137"/>
<dbReference type="KEGG" id="ecoc:C3026_22360"/>
<dbReference type="PATRIC" id="fig|1411691.4.peg.2563"/>
<dbReference type="EchoBASE" id="EB2094"/>
<dbReference type="eggNOG" id="COG1324">
    <property type="taxonomic scope" value="Bacteria"/>
</dbReference>
<dbReference type="HOGENOM" id="CLU_098807_3_0_6"/>
<dbReference type="InParanoid" id="P69488"/>
<dbReference type="OMA" id="VYTTFPD"/>
<dbReference type="OrthoDB" id="37622at2"/>
<dbReference type="PhylomeDB" id="P69488"/>
<dbReference type="BioCyc" id="EcoCyc:EG12177-MONOMER"/>
<dbReference type="EvolutionaryTrace" id="P69488"/>
<dbReference type="PRO" id="PR:P69488"/>
<dbReference type="Proteomes" id="UP000000625">
    <property type="component" value="Chromosome"/>
</dbReference>
<dbReference type="GO" id="GO:0005737">
    <property type="term" value="C:cytoplasm"/>
    <property type="evidence" value="ECO:0007669"/>
    <property type="project" value="UniProtKB-SubCell"/>
</dbReference>
<dbReference type="GO" id="GO:0032991">
    <property type="term" value="C:protein-containing complex"/>
    <property type="evidence" value="ECO:0000314"/>
    <property type="project" value="EcoCyc"/>
</dbReference>
<dbReference type="GO" id="GO:0005507">
    <property type="term" value="F:copper ion binding"/>
    <property type="evidence" value="ECO:0000314"/>
    <property type="project" value="UniProtKB"/>
</dbReference>
<dbReference type="GO" id="GO:0046872">
    <property type="term" value="F:metal ion binding"/>
    <property type="evidence" value="ECO:0000314"/>
    <property type="project" value="EcoCyc"/>
</dbReference>
<dbReference type="GO" id="GO:0046688">
    <property type="term" value="P:response to copper ion"/>
    <property type="evidence" value="ECO:0000315"/>
    <property type="project" value="EcoCyc"/>
</dbReference>
<dbReference type="FunFam" id="3.30.70.120:FF:000004">
    <property type="entry name" value="Divalent-cation tolerance protein CutA"/>
    <property type="match status" value="1"/>
</dbReference>
<dbReference type="Gene3D" id="3.30.70.120">
    <property type="match status" value="1"/>
</dbReference>
<dbReference type="HAMAP" id="MF_01160">
    <property type="entry name" value="CutA"/>
    <property type="match status" value="1"/>
</dbReference>
<dbReference type="InterPro" id="IPR023700">
    <property type="entry name" value="CutA_Enterobact"/>
</dbReference>
<dbReference type="InterPro" id="IPR004323">
    <property type="entry name" value="Ion_tolerance_CutA"/>
</dbReference>
<dbReference type="InterPro" id="IPR011322">
    <property type="entry name" value="N-reg_PII-like_a/b"/>
</dbReference>
<dbReference type="InterPro" id="IPR015867">
    <property type="entry name" value="N-reg_PII/ATP_PRibTrfase_C"/>
</dbReference>
<dbReference type="NCBIfam" id="NF007930">
    <property type="entry name" value="PRK10645.1"/>
    <property type="match status" value="1"/>
</dbReference>
<dbReference type="PANTHER" id="PTHR23419">
    <property type="entry name" value="DIVALENT CATION TOLERANCE CUTA-RELATED"/>
    <property type="match status" value="1"/>
</dbReference>
<dbReference type="PANTHER" id="PTHR23419:SF8">
    <property type="entry name" value="FI09726P"/>
    <property type="match status" value="1"/>
</dbReference>
<dbReference type="Pfam" id="PF03091">
    <property type="entry name" value="CutA1"/>
    <property type="match status" value="1"/>
</dbReference>
<dbReference type="SUPFAM" id="SSF54913">
    <property type="entry name" value="GlnB-like"/>
    <property type="match status" value="1"/>
</dbReference>
<reference key="1">
    <citation type="journal article" date="1995" name="Mol. Microbiol.">
        <title>The biogenesis of c-type cytochromes in Escherichia coli requires a membrane-bound protein, DipZ, with a protein disulphide isomerase-like domain.</title>
        <authorList>
            <person name="Crooke H.R."/>
            <person name="Cole J.A."/>
        </authorList>
    </citation>
    <scope>NUCLEOTIDE SEQUENCE [GENOMIC DNA]</scope>
    <source>
        <strain>K12</strain>
    </source>
</reference>
<reference key="2">
    <citation type="journal article" date="1995" name="Mol. Microbiol.">
        <title>Molecular genetics of a chromosomal locus involved in copper tolerance in Escherichia coli K-12.</title>
        <authorList>
            <person name="Fong S.-T."/>
            <person name="Camakaris J."/>
            <person name="Lee B.T.O."/>
        </authorList>
    </citation>
    <scope>NUCLEOTIDE SEQUENCE [GENOMIC DNA]</scope>
    <scope>FUNCTION</scope>
    <scope>SUBCELLULAR LOCATION</scope>
    <source>
        <strain>K12 / W3110 / ATCC 27325 / DSM 5911</strain>
    </source>
</reference>
<reference key="3">
    <citation type="journal article" date="1995" name="Nucleic Acids Res.">
        <title>Analysis of the Escherichia coli genome VI: DNA sequence of the region from 92.8 through 100 minutes.</title>
        <authorList>
            <person name="Burland V.D."/>
            <person name="Plunkett G. III"/>
            <person name="Sofia H.J."/>
            <person name="Daniels D.L."/>
            <person name="Blattner F.R."/>
        </authorList>
    </citation>
    <scope>NUCLEOTIDE SEQUENCE [LARGE SCALE GENOMIC DNA]</scope>
    <source>
        <strain>K12 / MG1655 / ATCC 47076</strain>
    </source>
</reference>
<reference key="4">
    <citation type="journal article" date="1997" name="Science">
        <title>The complete genome sequence of Escherichia coli K-12.</title>
        <authorList>
            <person name="Blattner F.R."/>
            <person name="Plunkett G. III"/>
            <person name="Bloch C.A."/>
            <person name="Perna N.T."/>
            <person name="Burland V."/>
            <person name="Riley M."/>
            <person name="Collado-Vides J."/>
            <person name="Glasner J.D."/>
            <person name="Rode C.K."/>
            <person name="Mayhew G.F."/>
            <person name="Gregor J."/>
            <person name="Davis N.W."/>
            <person name="Kirkpatrick H.A."/>
            <person name="Goeden M.A."/>
            <person name="Rose D.J."/>
            <person name="Mau B."/>
            <person name="Shao Y."/>
        </authorList>
    </citation>
    <scope>NUCLEOTIDE SEQUENCE [LARGE SCALE GENOMIC DNA]</scope>
    <source>
        <strain>K12 / MG1655 / ATCC 47076</strain>
    </source>
</reference>
<reference key="5">
    <citation type="journal article" date="2006" name="Mol. Syst. Biol.">
        <title>Highly accurate genome sequences of Escherichia coli K-12 strains MG1655 and W3110.</title>
        <authorList>
            <person name="Hayashi K."/>
            <person name="Morooka N."/>
            <person name="Yamamoto Y."/>
            <person name="Fujita K."/>
            <person name="Isono K."/>
            <person name="Choi S."/>
            <person name="Ohtsubo E."/>
            <person name="Baba T."/>
            <person name="Wanner B.L."/>
            <person name="Mori H."/>
            <person name="Horiuchi T."/>
        </authorList>
    </citation>
    <scope>NUCLEOTIDE SEQUENCE [LARGE SCALE GENOMIC DNA]</scope>
    <source>
        <strain>K12 / W3110 / ATCC 27325 / DSM 5911</strain>
    </source>
</reference>
<reference key="6">
    <citation type="journal article" date="2003" name="J. Biol. Chem.">
        <title>The evolutionarily conserved trimeric structure of CutA1 proteins suggests a role in signal transduction.</title>
        <authorList>
            <person name="Arnesano F."/>
            <person name="Banci L."/>
            <person name="Benvenuti M."/>
            <person name="Bertini I."/>
            <person name="Calderone V."/>
            <person name="Mangani S."/>
            <person name="Viezzoli M.S."/>
        </authorList>
    </citation>
    <scope>X-RAY CRYSTALLOGRAPHY (1.7 ANGSTROMS)</scope>
    <scope>COFACTOR</scope>
    <scope>SUBUNIT</scope>
    <source>
        <strain>LE392</strain>
    </source>
</reference>
<accession>P69488</accession>
<accession>P36654</accession>
<accession>Q2M6G7</accession>
<evidence type="ECO:0000269" key="1">
    <source>
    </source>
</evidence>
<evidence type="ECO:0000269" key="2">
    <source>
    </source>
</evidence>
<evidence type="ECO:0000305" key="3"/>
<evidence type="ECO:0000305" key="4">
    <source>
    </source>
</evidence>
<evidence type="ECO:0000305" key="5">
    <source>
    </source>
</evidence>
<evidence type="ECO:0007829" key="6">
    <source>
        <dbReference type="PDB" id="1NAQ"/>
    </source>
</evidence>
<evidence type="ECO:0007829" key="7">
    <source>
        <dbReference type="PDB" id="4Y65"/>
    </source>
</evidence>
<organism>
    <name type="scientific">Escherichia coli (strain K12)</name>
    <dbReference type="NCBI Taxonomy" id="83333"/>
    <lineage>
        <taxon>Bacteria</taxon>
        <taxon>Pseudomonadati</taxon>
        <taxon>Pseudomonadota</taxon>
        <taxon>Gammaproteobacteria</taxon>
        <taxon>Enterobacterales</taxon>
        <taxon>Enterobacteriaceae</taxon>
        <taxon>Escherichia</taxon>
    </lineage>
</organism>
<feature type="chain" id="PRO_0000157118" description="Divalent-cation tolerance protein CutA">
    <location>
        <begin position="1"/>
        <end position="112"/>
    </location>
</feature>
<feature type="binding site" evidence="3">
    <location>
        <position position="16"/>
    </location>
    <ligand>
        <name>Cu cation</name>
        <dbReference type="ChEBI" id="CHEBI:23378"/>
    </ligand>
</feature>
<feature type="binding site" evidence="3">
    <location>
        <position position="83"/>
    </location>
    <ligand>
        <name>Cu cation</name>
        <dbReference type="ChEBI" id="CHEBI:23378"/>
    </ligand>
</feature>
<feature type="binding site" evidence="3">
    <location>
        <position position="84"/>
    </location>
    <ligand>
        <name>Cu cation</name>
        <dbReference type="ChEBI" id="CHEBI:23378"/>
    </ligand>
</feature>
<feature type="sequence conflict" description="In Ref. 1." evidence="3" ref="1">
    <original>A</original>
    <variation>R</variation>
    <location>
        <position position="24"/>
    </location>
</feature>
<feature type="turn" evidence="7">
    <location>
        <begin position="4"/>
        <end position="6"/>
    </location>
</feature>
<feature type="strand" evidence="6">
    <location>
        <begin position="11"/>
        <end position="20"/>
    </location>
</feature>
<feature type="helix" evidence="6">
    <location>
        <begin position="21"/>
        <end position="33"/>
    </location>
</feature>
<feature type="strand" evidence="6">
    <location>
        <begin position="38"/>
        <end position="52"/>
    </location>
</feature>
<feature type="strand" evidence="6">
    <location>
        <begin position="55"/>
        <end position="69"/>
    </location>
</feature>
<feature type="helix" evidence="6">
    <location>
        <begin position="70"/>
        <end position="72"/>
    </location>
</feature>
<feature type="helix" evidence="6">
    <location>
        <begin position="73"/>
        <end position="83"/>
    </location>
</feature>
<feature type="strand" evidence="7">
    <location>
        <begin position="85"/>
        <end position="88"/>
    </location>
</feature>
<feature type="strand" evidence="6">
    <location>
        <begin position="91"/>
        <end position="95"/>
    </location>
</feature>
<feature type="helix" evidence="6">
    <location>
        <begin position="101"/>
        <end position="110"/>
    </location>
</feature>
<proteinExistence type="evidence at protein level"/>
<sequence length="112" mass="12331">MLDEKSSNTASVVVLCTAPDEATAQDLAAKVLAEKLAACATLIPGATSLYYWEGKLEQEYEVQMILKTTVSHQQALLECLKSHHPYQTPELLVLPVTHGDTDYLSWLNASLR</sequence>
<keyword id="KW-0002">3D-structure</keyword>
<keyword id="KW-0186">Copper</keyword>
<keyword id="KW-0963">Cytoplasm</keyword>
<keyword id="KW-0479">Metal-binding</keyword>
<keyword id="KW-1185">Reference proteome</keyword>